<dbReference type="EC" id="2.1.1.182" evidence="1"/>
<dbReference type="EMBL" id="CP001581">
    <property type="protein sequence ID" value="ACO83613.1"/>
    <property type="molecule type" value="Genomic_DNA"/>
</dbReference>
<dbReference type="SMR" id="C1FQ40"/>
<dbReference type="KEGG" id="cby:CLM_0124"/>
<dbReference type="eggNOG" id="COG0030">
    <property type="taxonomic scope" value="Bacteria"/>
</dbReference>
<dbReference type="HOGENOM" id="CLU_041220_0_0_9"/>
<dbReference type="Proteomes" id="UP000001374">
    <property type="component" value="Chromosome"/>
</dbReference>
<dbReference type="GO" id="GO:0005829">
    <property type="term" value="C:cytosol"/>
    <property type="evidence" value="ECO:0007669"/>
    <property type="project" value="TreeGrafter"/>
</dbReference>
<dbReference type="GO" id="GO:0052908">
    <property type="term" value="F:16S rRNA (adenine(1518)-N(6)/adenine(1519)-N(6))-dimethyltransferase activity"/>
    <property type="evidence" value="ECO:0007669"/>
    <property type="project" value="UniProtKB-EC"/>
</dbReference>
<dbReference type="GO" id="GO:0003723">
    <property type="term" value="F:RNA binding"/>
    <property type="evidence" value="ECO:0007669"/>
    <property type="project" value="UniProtKB-KW"/>
</dbReference>
<dbReference type="CDD" id="cd02440">
    <property type="entry name" value="AdoMet_MTases"/>
    <property type="match status" value="1"/>
</dbReference>
<dbReference type="FunFam" id="3.40.50.150:FF:000023">
    <property type="entry name" value="Ribosomal RNA small subunit methyltransferase A"/>
    <property type="match status" value="1"/>
</dbReference>
<dbReference type="Gene3D" id="1.10.8.100">
    <property type="entry name" value="Ribosomal RNA adenine dimethylase-like, domain 2"/>
    <property type="match status" value="1"/>
</dbReference>
<dbReference type="Gene3D" id="3.40.50.150">
    <property type="entry name" value="Vaccinia Virus protein VP39"/>
    <property type="match status" value="1"/>
</dbReference>
<dbReference type="HAMAP" id="MF_00607">
    <property type="entry name" value="16SrRNA_methyltr_A"/>
    <property type="match status" value="1"/>
</dbReference>
<dbReference type="InterPro" id="IPR001737">
    <property type="entry name" value="KsgA/Erm"/>
</dbReference>
<dbReference type="InterPro" id="IPR023165">
    <property type="entry name" value="rRNA_Ade_diMease-like_C"/>
</dbReference>
<dbReference type="InterPro" id="IPR020596">
    <property type="entry name" value="rRNA_Ade_Mease_Trfase_CS"/>
</dbReference>
<dbReference type="InterPro" id="IPR020598">
    <property type="entry name" value="rRNA_Ade_methylase_Trfase_N"/>
</dbReference>
<dbReference type="InterPro" id="IPR011530">
    <property type="entry name" value="rRNA_adenine_dimethylase"/>
</dbReference>
<dbReference type="InterPro" id="IPR029063">
    <property type="entry name" value="SAM-dependent_MTases_sf"/>
</dbReference>
<dbReference type="NCBIfam" id="TIGR00755">
    <property type="entry name" value="ksgA"/>
    <property type="match status" value="1"/>
</dbReference>
<dbReference type="PANTHER" id="PTHR11727">
    <property type="entry name" value="DIMETHYLADENOSINE TRANSFERASE"/>
    <property type="match status" value="1"/>
</dbReference>
<dbReference type="PANTHER" id="PTHR11727:SF7">
    <property type="entry name" value="DIMETHYLADENOSINE TRANSFERASE-RELATED"/>
    <property type="match status" value="1"/>
</dbReference>
<dbReference type="Pfam" id="PF00398">
    <property type="entry name" value="RrnaAD"/>
    <property type="match status" value="1"/>
</dbReference>
<dbReference type="SMART" id="SM00650">
    <property type="entry name" value="rADc"/>
    <property type="match status" value="1"/>
</dbReference>
<dbReference type="SUPFAM" id="SSF53335">
    <property type="entry name" value="S-adenosyl-L-methionine-dependent methyltransferases"/>
    <property type="match status" value="1"/>
</dbReference>
<dbReference type="PROSITE" id="PS01131">
    <property type="entry name" value="RRNA_A_DIMETH"/>
    <property type="match status" value="1"/>
</dbReference>
<dbReference type="PROSITE" id="PS51689">
    <property type="entry name" value="SAM_RNA_A_N6_MT"/>
    <property type="match status" value="1"/>
</dbReference>
<evidence type="ECO:0000255" key="1">
    <source>
        <dbReference type="HAMAP-Rule" id="MF_00607"/>
    </source>
</evidence>
<name>RSMA_CLOBJ</name>
<proteinExistence type="inferred from homology"/>
<feature type="chain" id="PRO_1000212239" description="Ribosomal RNA small subunit methyltransferase A">
    <location>
        <begin position="1"/>
        <end position="275"/>
    </location>
</feature>
<feature type="binding site" evidence="1">
    <location>
        <position position="21"/>
    </location>
    <ligand>
        <name>S-adenosyl-L-methionine</name>
        <dbReference type="ChEBI" id="CHEBI:59789"/>
    </ligand>
</feature>
<feature type="binding site" evidence="1">
    <location>
        <position position="23"/>
    </location>
    <ligand>
        <name>S-adenosyl-L-methionine</name>
        <dbReference type="ChEBI" id="CHEBI:59789"/>
    </ligand>
</feature>
<feature type="binding site" evidence="1">
    <location>
        <position position="48"/>
    </location>
    <ligand>
        <name>S-adenosyl-L-methionine</name>
        <dbReference type="ChEBI" id="CHEBI:59789"/>
    </ligand>
</feature>
<feature type="binding site" evidence="1">
    <location>
        <position position="69"/>
    </location>
    <ligand>
        <name>S-adenosyl-L-methionine</name>
        <dbReference type="ChEBI" id="CHEBI:59789"/>
    </ligand>
</feature>
<feature type="binding site" evidence="1">
    <location>
        <position position="94"/>
    </location>
    <ligand>
        <name>S-adenosyl-L-methionine</name>
        <dbReference type="ChEBI" id="CHEBI:59789"/>
    </ligand>
</feature>
<feature type="binding site" evidence="1">
    <location>
        <position position="115"/>
    </location>
    <ligand>
        <name>S-adenosyl-L-methionine</name>
        <dbReference type="ChEBI" id="CHEBI:59789"/>
    </ligand>
</feature>
<keyword id="KW-0963">Cytoplasm</keyword>
<keyword id="KW-0489">Methyltransferase</keyword>
<keyword id="KW-0694">RNA-binding</keyword>
<keyword id="KW-0698">rRNA processing</keyword>
<keyword id="KW-0949">S-adenosyl-L-methionine</keyword>
<keyword id="KW-0808">Transferase</keyword>
<reference key="1">
    <citation type="submission" date="2008-10" db="EMBL/GenBank/DDBJ databases">
        <title>Genome sequence of Clostridium botulinum A2 Kyoto.</title>
        <authorList>
            <person name="Shrivastava S."/>
            <person name="Brinkac L.M."/>
            <person name="Brown J.L."/>
            <person name="Bruce D."/>
            <person name="Detter C.C."/>
            <person name="Johnson E.A."/>
            <person name="Munk C.A."/>
            <person name="Smith L.A."/>
            <person name="Smith T.J."/>
            <person name="Sutton G."/>
            <person name="Brettin T.S."/>
        </authorList>
    </citation>
    <scope>NUCLEOTIDE SEQUENCE [LARGE SCALE GENOMIC DNA]</scope>
    <source>
        <strain>Kyoto / Type A2</strain>
    </source>
</reference>
<organism>
    <name type="scientific">Clostridium botulinum (strain Kyoto / Type A2)</name>
    <dbReference type="NCBI Taxonomy" id="536232"/>
    <lineage>
        <taxon>Bacteria</taxon>
        <taxon>Bacillati</taxon>
        <taxon>Bacillota</taxon>
        <taxon>Clostridia</taxon>
        <taxon>Eubacteriales</taxon>
        <taxon>Clostridiaceae</taxon>
        <taxon>Clostridium</taxon>
    </lineage>
</organism>
<sequence length="275" mass="31801">MNTKEIVNKYEFKFNKNLGQNFLIDESVLEDIIEGAEINKEDTVIEIGPGVGTLTKELLERAKEVYSIELDGDLIPILQEELKEYNNFTLIHKDALKIDFNELMENKDSIKLVANLPYYVTTPIISRLLTEKCNFKSLTIMIQKEVAERINAEPNCKEYGSLTVLVQYYCNTKIIRKVSPNSFIPRPKVDSIVIKLDRLSEPRVRVKSQKLFFNVVRSSFNMRRKTLWNSLKSLNINKESMENAFERAGIDSKRRGETLSIEEFGKLSDCIYDIL</sequence>
<comment type="function">
    <text evidence="1">Specifically dimethylates two adjacent adenosines (A1518 and A1519) in the loop of a conserved hairpin near the 3'-end of 16S rRNA in the 30S particle. May play a critical role in biogenesis of 30S subunits.</text>
</comment>
<comment type="catalytic activity">
    <reaction evidence="1">
        <text>adenosine(1518)/adenosine(1519) in 16S rRNA + 4 S-adenosyl-L-methionine = N(6)-dimethyladenosine(1518)/N(6)-dimethyladenosine(1519) in 16S rRNA + 4 S-adenosyl-L-homocysteine + 4 H(+)</text>
        <dbReference type="Rhea" id="RHEA:19609"/>
        <dbReference type="Rhea" id="RHEA-COMP:10232"/>
        <dbReference type="Rhea" id="RHEA-COMP:10233"/>
        <dbReference type="ChEBI" id="CHEBI:15378"/>
        <dbReference type="ChEBI" id="CHEBI:57856"/>
        <dbReference type="ChEBI" id="CHEBI:59789"/>
        <dbReference type="ChEBI" id="CHEBI:74411"/>
        <dbReference type="ChEBI" id="CHEBI:74493"/>
        <dbReference type="EC" id="2.1.1.182"/>
    </reaction>
</comment>
<comment type="subcellular location">
    <subcellularLocation>
        <location evidence="1">Cytoplasm</location>
    </subcellularLocation>
</comment>
<comment type="similarity">
    <text evidence="1">Belongs to the class I-like SAM-binding methyltransferase superfamily. rRNA adenine N(6)-methyltransferase family. RsmA subfamily.</text>
</comment>
<protein>
    <recommendedName>
        <fullName evidence="1">Ribosomal RNA small subunit methyltransferase A</fullName>
        <ecNumber evidence="1">2.1.1.182</ecNumber>
    </recommendedName>
    <alternativeName>
        <fullName evidence="1">16S rRNA (adenine(1518)-N(6)/adenine(1519)-N(6))-dimethyltransferase</fullName>
    </alternativeName>
    <alternativeName>
        <fullName evidence="1">16S rRNA dimethyladenosine transferase</fullName>
    </alternativeName>
    <alternativeName>
        <fullName evidence="1">16S rRNA dimethylase</fullName>
    </alternativeName>
    <alternativeName>
        <fullName evidence="1">S-adenosylmethionine-6-N', N'-adenosyl(rRNA) dimethyltransferase</fullName>
    </alternativeName>
</protein>
<gene>
    <name evidence="1" type="primary">rsmA</name>
    <name evidence="1" type="synonym">ksgA</name>
    <name type="ordered locus">CLM_0124</name>
</gene>
<accession>C1FQ40</accession>